<dbReference type="EMBL" id="CP000103">
    <property type="protein sequence ID" value="ABB74071.1"/>
    <property type="molecule type" value="Genomic_DNA"/>
</dbReference>
<dbReference type="RefSeq" id="WP_011380121.1">
    <property type="nucleotide sequence ID" value="NC_007614.1"/>
</dbReference>
<dbReference type="SMR" id="Q2YB00"/>
<dbReference type="STRING" id="323848.Nmul_A0764"/>
<dbReference type="KEGG" id="nmu:Nmul_A0764"/>
<dbReference type="eggNOG" id="COG0480">
    <property type="taxonomic scope" value="Bacteria"/>
</dbReference>
<dbReference type="HOGENOM" id="CLU_002794_4_1_4"/>
<dbReference type="OrthoDB" id="9804431at2"/>
<dbReference type="Proteomes" id="UP000002718">
    <property type="component" value="Chromosome"/>
</dbReference>
<dbReference type="GO" id="GO:0005737">
    <property type="term" value="C:cytoplasm"/>
    <property type="evidence" value="ECO:0007669"/>
    <property type="project" value="UniProtKB-SubCell"/>
</dbReference>
<dbReference type="GO" id="GO:0005525">
    <property type="term" value="F:GTP binding"/>
    <property type="evidence" value="ECO:0007669"/>
    <property type="project" value="UniProtKB-UniRule"/>
</dbReference>
<dbReference type="GO" id="GO:0003924">
    <property type="term" value="F:GTPase activity"/>
    <property type="evidence" value="ECO:0007669"/>
    <property type="project" value="InterPro"/>
</dbReference>
<dbReference type="GO" id="GO:0097216">
    <property type="term" value="F:guanosine tetraphosphate binding"/>
    <property type="evidence" value="ECO:0007669"/>
    <property type="project" value="UniProtKB-ARBA"/>
</dbReference>
<dbReference type="GO" id="GO:0003746">
    <property type="term" value="F:translation elongation factor activity"/>
    <property type="evidence" value="ECO:0007669"/>
    <property type="project" value="UniProtKB-UniRule"/>
</dbReference>
<dbReference type="GO" id="GO:0032790">
    <property type="term" value="P:ribosome disassembly"/>
    <property type="evidence" value="ECO:0007669"/>
    <property type="project" value="TreeGrafter"/>
</dbReference>
<dbReference type="CDD" id="cd01886">
    <property type="entry name" value="EF-G"/>
    <property type="match status" value="1"/>
</dbReference>
<dbReference type="CDD" id="cd16262">
    <property type="entry name" value="EFG_III"/>
    <property type="match status" value="1"/>
</dbReference>
<dbReference type="CDD" id="cd01434">
    <property type="entry name" value="EFG_mtEFG1_IV"/>
    <property type="match status" value="1"/>
</dbReference>
<dbReference type="CDD" id="cd03713">
    <property type="entry name" value="EFG_mtEFG_C"/>
    <property type="match status" value="1"/>
</dbReference>
<dbReference type="CDD" id="cd04088">
    <property type="entry name" value="EFG_mtEFG_II"/>
    <property type="match status" value="1"/>
</dbReference>
<dbReference type="FunFam" id="2.40.30.10:FF:000006">
    <property type="entry name" value="Elongation factor G"/>
    <property type="match status" value="1"/>
</dbReference>
<dbReference type="FunFam" id="3.30.230.10:FF:000003">
    <property type="entry name" value="Elongation factor G"/>
    <property type="match status" value="1"/>
</dbReference>
<dbReference type="FunFam" id="3.30.70.240:FF:000001">
    <property type="entry name" value="Elongation factor G"/>
    <property type="match status" value="1"/>
</dbReference>
<dbReference type="FunFam" id="3.30.70.870:FF:000001">
    <property type="entry name" value="Elongation factor G"/>
    <property type="match status" value="1"/>
</dbReference>
<dbReference type="FunFam" id="3.40.50.300:FF:000029">
    <property type="entry name" value="Elongation factor G"/>
    <property type="match status" value="1"/>
</dbReference>
<dbReference type="Gene3D" id="3.30.230.10">
    <property type="match status" value="1"/>
</dbReference>
<dbReference type="Gene3D" id="3.30.70.240">
    <property type="match status" value="1"/>
</dbReference>
<dbReference type="Gene3D" id="3.30.70.870">
    <property type="entry name" value="Elongation Factor G (Translational Gtpase), domain 3"/>
    <property type="match status" value="1"/>
</dbReference>
<dbReference type="Gene3D" id="3.40.50.300">
    <property type="entry name" value="P-loop containing nucleotide triphosphate hydrolases"/>
    <property type="match status" value="1"/>
</dbReference>
<dbReference type="Gene3D" id="2.40.30.10">
    <property type="entry name" value="Translation factors"/>
    <property type="match status" value="1"/>
</dbReference>
<dbReference type="HAMAP" id="MF_00054_B">
    <property type="entry name" value="EF_G_EF_2_B"/>
    <property type="match status" value="1"/>
</dbReference>
<dbReference type="InterPro" id="IPR041095">
    <property type="entry name" value="EFG_II"/>
</dbReference>
<dbReference type="InterPro" id="IPR009022">
    <property type="entry name" value="EFG_III"/>
</dbReference>
<dbReference type="InterPro" id="IPR035647">
    <property type="entry name" value="EFG_III/V"/>
</dbReference>
<dbReference type="InterPro" id="IPR047872">
    <property type="entry name" value="EFG_IV"/>
</dbReference>
<dbReference type="InterPro" id="IPR035649">
    <property type="entry name" value="EFG_V"/>
</dbReference>
<dbReference type="InterPro" id="IPR000640">
    <property type="entry name" value="EFG_V-like"/>
</dbReference>
<dbReference type="InterPro" id="IPR004161">
    <property type="entry name" value="EFTu-like_2"/>
</dbReference>
<dbReference type="InterPro" id="IPR031157">
    <property type="entry name" value="G_TR_CS"/>
</dbReference>
<dbReference type="InterPro" id="IPR027417">
    <property type="entry name" value="P-loop_NTPase"/>
</dbReference>
<dbReference type="InterPro" id="IPR020568">
    <property type="entry name" value="Ribosomal_Su5_D2-typ_SF"/>
</dbReference>
<dbReference type="InterPro" id="IPR014721">
    <property type="entry name" value="Ribsml_uS5_D2-typ_fold_subgr"/>
</dbReference>
<dbReference type="InterPro" id="IPR005225">
    <property type="entry name" value="Small_GTP-bd"/>
</dbReference>
<dbReference type="InterPro" id="IPR000795">
    <property type="entry name" value="T_Tr_GTP-bd_dom"/>
</dbReference>
<dbReference type="InterPro" id="IPR009000">
    <property type="entry name" value="Transl_B-barrel_sf"/>
</dbReference>
<dbReference type="InterPro" id="IPR004540">
    <property type="entry name" value="Transl_elong_EFG/EF2"/>
</dbReference>
<dbReference type="InterPro" id="IPR005517">
    <property type="entry name" value="Transl_elong_EFG/EF2_IV"/>
</dbReference>
<dbReference type="NCBIfam" id="TIGR00484">
    <property type="entry name" value="EF-G"/>
    <property type="match status" value="1"/>
</dbReference>
<dbReference type="NCBIfam" id="NF009379">
    <property type="entry name" value="PRK12740.1-3"/>
    <property type="match status" value="1"/>
</dbReference>
<dbReference type="NCBIfam" id="NF009381">
    <property type="entry name" value="PRK12740.1-5"/>
    <property type="match status" value="1"/>
</dbReference>
<dbReference type="NCBIfam" id="TIGR00231">
    <property type="entry name" value="small_GTP"/>
    <property type="match status" value="1"/>
</dbReference>
<dbReference type="PANTHER" id="PTHR43261:SF1">
    <property type="entry name" value="RIBOSOME-RELEASING FACTOR 2, MITOCHONDRIAL"/>
    <property type="match status" value="1"/>
</dbReference>
<dbReference type="PANTHER" id="PTHR43261">
    <property type="entry name" value="TRANSLATION ELONGATION FACTOR G-RELATED"/>
    <property type="match status" value="1"/>
</dbReference>
<dbReference type="Pfam" id="PF00679">
    <property type="entry name" value="EFG_C"/>
    <property type="match status" value="1"/>
</dbReference>
<dbReference type="Pfam" id="PF14492">
    <property type="entry name" value="EFG_III"/>
    <property type="match status" value="1"/>
</dbReference>
<dbReference type="Pfam" id="PF03764">
    <property type="entry name" value="EFG_IV"/>
    <property type="match status" value="1"/>
</dbReference>
<dbReference type="Pfam" id="PF00009">
    <property type="entry name" value="GTP_EFTU"/>
    <property type="match status" value="1"/>
</dbReference>
<dbReference type="Pfam" id="PF03144">
    <property type="entry name" value="GTP_EFTU_D2"/>
    <property type="match status" value="1"/>
</dbReference>
<dbReference type="PRINTS" id="PR00315">
    <property type="entry name" value="ELONGATNFCT"/>
</dbReference>
<dbReference type="SMART" id="SM00838">
    <property type="entry name" value="EFG_C"/>
    <property type="match status" value="1"/>
</dbReference>
<dbReference type="SMART" id="SM00889">
    <property type="entry name" value="EFG_IV"/>
    <property type="match status" value="1"/>
</dbReference>
<dbReference type="SUPFAM" id="SSF54980">
    <property type="entry name" value="EF-G C-terminal domain-like"/>
    <property type="match status" value="2"/>
</dbReference>
<dbReference type="SUPFAM" id="SSF52540">
    <property type="entry name" value="P-loop containing nucleoside triphosphate hydrolases"/>
    <property type="match status" value="1"/>
</dbReference>
<dbReference type="SUPFAM" id="SSF54211">
    <property type="entry name" value="Ribosomal protein S5 domain 2-like"/>
    <property type="match status" value="1"/>
</dbReference>
<dbReference type="SUPFAM" id="SSF50447">
    <property type="entry name" value="Translation proteins"/>
    <property type="match status" value="1"/>
</dbReference>
<dbReference type="PROSITE" id="PS00301">
    <property type="entry name" value="G_TR_1"/>
    <property type="match status" value="1"/>
</dbReference>
<dbReference type="PROSITE" id="PS51722">
    <property type="entry name" value="G_TR_2"/>
    <property type="match status" value="1"/>
</dbReference>
<protein>
    <recommendedName>
        <fullName evidence="1">Elongation factor G</fullName>
        <shortName evidence="1">EF-G</shortName>
    </recommendedName>
</protein>
<gene>
    <name evidence="1" type="primary">fusA</name>
    <name type="ordered locus">Nmul_A0764</name>
</gene>
<keyword id="KW-0963">Cytoplasm</keyword>
<keyword id="KW-0251">Elongation factor</keyword>
<keyword id="KW-0342">GTP-binding</keyword>
<keyword id="KW-0547">Nucleotide-binding</keyword>
<keyword id="KW-0648">Protein biosynthesis</keyword>
<keyword id="KW-1185">Reference proteome</keyword>
<proteinExistence type="inferred from homology"/>
<name>EFG_NITMU</name>
<organism>
    <name type="scientific">Nitrosospira multiformis (strain ATCC 25196 / NCIMB 11849 / C 71)</name>
    <dbReference type="NCBI Taxonomy" id="323848"/>
    <lineage>
        <taxon>Bacteria</taxon>
        <taxon>Pseudomonadati</taxon>
        <taxon>Pseudomonadota</taxon>
        <taxon>Betaproteobacteria</taxon>
        <taxon>Nitrosomonadales</taxon>
        <taxon>Nitrosomonadaceae</taxon>
        <taxon>Nitrosospira</taxon>
    </lineage>
</organism>
<sequence length="696" mass="77186">MARKTPIERYRNIGVMAHIDAGKTTTTERILFYTGVSHKLGEVHDGAATMDWMEQEQERGITITSAATTCFWKGMDHNYPDHRINIIDTPGHVDFTIEVERSLRVLDGACTVFCAVGGVQPQTETVWRQANKYKVPRLAFVNKMDRAGANFMRVYEQIQSRLKAHPVPIQLPIGAEDKFEGVVDLIKMKAIHWDDASQGMRFEERDIPANMVEDAKSWREKMVESAAEANEELMNKYLEEGDLSPADIKQGLRIRTLANEIVPMLCGSAFKNKGVQAMLDAVLDYLPSPADIEAIDGEKESGEHAERHASDEEPFAGLAFKIATDPYVGQLIFFRVYSGVVTSGDTVYNPIKGRKERIGRLLQMHANQREEIKEVRAGDIAAAVGLKEAVTGDTLCDPADVITLERMVFPEPVIHVAVEPKTKLDQEKMGIALNRLAQEDPSFRVRTDEESGQTIISGMGELHLEIIVDRMKREFGVEANVGAPQVAYREAIRKSVDVEGKFIKQSGGRGQYGHVWIKMEQNEAGKGFEFIDAIKGGTVPREYIPAVQKGLEETLPNGVLAGFPVVDVKVTLFDGSYHDVDSNENAFKMAASIAFKDGMRKANPVLLEPMMSVEVETPADFMGNVVGDLSSRRGMIQGMDDLPGLKVVRAEVPLAEMFGYATSLRSATQGRATYTMEFKHYAEAPKNVAEAIISKK</sequence>
<accession>Q2YB00</accession>
<evidence type="ECO:0000255" key="1">
    <source>
        <dbReference type="HAMAP-Rule" id="MF_00054"/>
    </source>
</evidence>
<feature type="chain" id="PRO_0000263478" description="Elongation factor G">
    <location>
        <begin position="1"/>
        <end position="696"/>
    </location>
</feature>
<feature type="domain" description="tr-type G">
    <location>
        <begin position="8"/>
        <end position="290"/>
    </location>
</feature>
<feature type="binding site" evidence="1">
    <location>
        <begin position="17"/>
        <end position="24"/>
    </location>
    <ligand>
        <name>GTP</name>
        <dbReference type="ChEBI" id="CHEBI:37565"/>
    </ligand>
</feature>
<feature type="binding site" evidence="1">
    <location>
        <begin position="88"/>
        <end position="92"/>
    </location>
    <ligand>
        <name>GTP</name>
        <dbReference type="ChEBI" id="CHEBI:37565"/>
    </ligand>
</feature>
<feature type="binding site" evidence="1">
    <location>
        <begin position="142"/>
        <end position="145"/>
    </location>
    <ligand>
        <name>GTP</name>
        <dbReference type="ChEBI" id="CHEBI:37565"/>
    </ligand>
</feature>
<comment type="function">
    <text evidence="1">Catalyzes the GTP-dependent ribosomal translocation step during translation elongation. During this step, the ribosome changes from the pre-translocational (PRE) to the post-translocational (POST) state as the newly formed A-site-bound peptidyl-tRNA and P-site-bound deacylated tRNA move to the P and E sites, respectively. Catalyzes the coordinated movement of the two tRNA molecules, the mRNA and conformational changes in the ribosome.</text>
</comment>
<comment type="subcellular location">
    <subcellularLocation>
        <location evidence="1">Cytoplasm</location>
    </subcellularLocation>
</comment>
<comment type="similarity">
    <text evidence="1">Belongs to the TRAFAC class translation factor GTPase superfamily. Classic translation factor GTPase family. EF-G/EF-2 subfamily.</text>
</comment>
<reference key="1">
    <citation type="submission" date="2005-08" db="EMBL/GenBank/DDBJ databases">
        <title>Complete sequence of chromosome 1 of Nitrosospira multiformis ATCC 25196.</title>
        <authorList>
            <person name="Copeland A."/>
            <person name="Lucas S."/>
            <person name="Lapidus A."/>
            <person name="Barry K."/>
            <person name="Detter J.C."/>
            <person name="Glavina T."/>
            <person name="Hammon N."/>
            <person name="Israni S."/>
            <person name="Pitluck S."/>
            <person name="Chain P."/>
            <person name="Malfatti S."/>
            <person name="Shin M."/>
            <person name="Vergez L."/>
            <person name="Schmutz J."/>
            <person name="Larimer F."/>
            <person name="Land M."/>
            <person name="Hauser L."/>
            <person name="Kyrpides N."/>
            <person name="Lykidis A."/>
            <person name="Richardson P."/>
        </authorList>
    </citation>
    <scope>NUCLEOTIDE SEQUENCE [LARGE SCALE GENOMIC DNA]</scope>
    <source>
        <strain>ATCC 25196 / NCIMB 11849 / C 71</strain>
    </source>
</reference>